<protein>
    <recommendedName>
        <fullName>Translation repressor protein</fullName>
    </recommendedName>
</protein>
<gene>
    <name type="primary">regA</name>
</gene>
<feature type="chain" id="PRO_0000164968" description="Translation repressor protein">
    <location>
        <begin position="1"/>
        <end position="122"/>
    </location>
</feature>
<feature type="DNA-binding region" description="H-T-H motif" evidence="1">
    <location>
        <begin position="15"/>
        <end position="37"/>
    </location>
</feature>
<feature type="strand" evidence="2">
    <location>
        <begin position="2"/>
        <end position="5"/>
    </location>
</feature>
<feature type="helix" evidence="2">
    <location>
        <begin position="11"/>
        <end position="20"/>
    </location>
</feature>
<feature type="strand" evidence="2">
    <location>
        <begin position="22"/>
        <end position="26"/>
    </location>
</feature>
<feature type="turn" evidence="2">
    <location>
        <begin position="27"/>
        <end position="30"/>
    </location>
</feature>
<feature type="strand" evidence="2">
    <location>
        <begin position="31"/>
        <end position="34"/>
    </location>
</feature>
<feature type="strand" evidence="2">
    <location>
        <begin position="36"/>
        <end position="41"/>
    </location>
</feature>
<feature type="strand" evidence="2">
    <location>
        <begin position="44"/>
        <end position="49"/>
    </location>
</feature>
<feature type="helix" evidence="2">
    <location>
        <begin position="50"/>
        <end position="56"/>
    </location>
</feature>
<feature type="helix" evidence="2">
    <location>
        <begin position="65"/>
        <end position="80"/>
    </location>
</feature>
<feature type="turn" evidence="2">
    <location>
        <begin position="106"/>
        <end position="108"/>
    </location>
</feature>
<feature type="helix" evidence="2">
    <location>
        <begin position="109"/>
        <end position="111"/>
    </location>
</feature>
<feature type="strand" evidence="2">
    <location>
        <begin position="112"/>
        <end position="116"/>
    </location>
</feature>
<feature type="turn" evidence="2">
    <location>
        <begin position="117"/>
        <end position="119"/>
    </location>
</feature>
<comment type="function">
    <text>Controls the translation of a number of proteins (such as regA itself, rIIB and at least 35 others) by binding to their mRNA.</text>
</comment>
<keyword id="KW-0002">3D-structure</keyword>
<keyword id="KW-1185">Reference proteome</keyword>
<keyword id="KW-0678">Repressor</keyword>
<keyword id="KW-0694">RNA-binding</keyword>
<keyword id="KW-0810">Translation regulation</keyword>
<proteinExistence type="evidence at protein level"/>
<accession>P69702</accession>
<accession>P04528</accession>
<organism>
    <name type="scientific">Enterobacteria phage T4</name>
    <name type="common">Bacteriophage T4</name>
    <dbReference type="NCBI Taxonomy" id="10665"/>
    <lineage>
        <taxon>Viruses</taxon>
        <taxon>Duplodnaviria</taxon>
        <taxon>Heunggongvirae</taxon>
        <taxon>Uroviricota</taxon>
        <taxon>Caudoviricetes</taxon>
        <taxon>Straboviridae</taxon>
        <taxon>Tevenvirinae</taxon>
        <taxon>Tequatrovirus</taxon>
    </lineage>
</organism>
<dbReference type="EMBL" id="X00769">
    <property type="protein sequence ID" value="CAA25343.1"/>
    <property type="molecule type" value="Genomic_DNA"/>
</dbReference>
<dbReference type="EMBL" id="M10160">
    <property type="protein sequence ID" value="AAC05396.1"/>
    <property type="molecule type" value="Genomic_DNA"/>
</dbReference>
<dbReference type="EMBL" id="AF158101">
    <property type="protein sequence ID" value="AAD42651.1"/>
    <property type="molecule type" value="Genomic_DNA"/>
</dbReference>
<dbReference type="PIR" id="A93530">
    <property type="entry name" value="RGBPT4"/>
</dbReference>
<dbReference type="RefSeq" id="NP_049663.1">
    <property type="nucleotide sequence ID" value="NC_000866.4"/>
</dbReference>
<dbReference type="PDB" id="1REG">
    <property type="method" value="X-ray"/>
    <property type="resolution" value="1.90 A"/>
    <property type="chains" value="X/Y=1-122"/>
</dbReference>
<dbReference type="PDBsum" id="1REG"/>
<dbReference type="SMR" id="P69702"/>
<dbReference type="GeneID" id="1258694"/>
<dbReference type="KEGG" id="vg:1258694"/>
<dbReference type="OrthoDB" id="14181at10239"/>
<dbReference type="EvolutionaryTrace" id="P69702"/>
<dbReference type="Proteomes" id="UP000009087">
    <property type="component" value="Segment"/>
</dbReference>
<dbReference type="GO" id="GO:0003723">
    <property type="term" value="F:RNA binding"/>
    <property type="evidence" value="ECO:0007669"/>
    <property type="project" value="UniProtKB-KW"/>
</dbReference>
<dbReference type="GO" id="GO:0006417">
    <property type="term" value="P:regulation of translation"/>
    <property type="evidence" value="ECO:0007669"/>
    <property type="project" value="UniProtKB-KW"/>
</dbReference>
<dbReference type="Gene3D" id="3.30.70.650">
    <property type="entry name" value="Translation repressor RegA"/>
    <property type="match status" value="1"/>
</dbReference>
<dbReference type="InterPro" id="IPR002702">
    <property type="entry name" value="Transl_repress_RegA"/>
</dbReference>
<dbReference type="InterPro" id="IPR036516">
    <property type="entry name" value="Transl_repress_RegA_sf"/>
</dbReference>
<dbReference type="Pfam" id="PF01818">
    <property type="entry name" value="Translat_reg"/>
    <property type="match status" value="1"/>
</dbReference>
<dbReference type="SUPFAM" id="SSF55064">
    <property type="entry name" value="Translational regulator protein regA"/>
    <property type="match status" value="1"/>
</dbReference>
<name>REGA_BPT4</name>
<organismHost>
    <name type="scientific">Escherichia coli</name>
    <dbReference type="NCBI Taxonomy" id="562"/>
</organismHost>
<reference key="1">
    <citation type="journal article" date="1984" name="Nucleic Acids Res.">
        <title>The bacteriophage T4 regA gene: primary sequence of a translational repressor.</title>
        <authorList>
            <person name="Trojanowska M."/>
            <person name="Miller E.S."/>
            <person name="Karam J."/>
            <person name="Stormo G."/>
            <person name="Gold L."/>
        </authorList>
    </citation>
    <scope>NUCLEOTIDE SEQUENCE [GENOMIC DNA]</scope>
</reference>
<reference key="2">
    <citation type="journal article" date="1985" name="Proc. Natl. Acad. Sci. U.S.A.">
        <title>Cloning, nucleotide sequence, and overexpression of the bacteriophage T4 regA gene.</title>
        <authorList>
            <person name="Adari H.Y."/>
            <person name="Rose K."/>
            <person name="Williams K.R."/>
            <person name="Konigsberg W.H."/>
            <person name="Lin T.C."/>
            <person name="Spicer E.K."/>
        </authorList>
    </citation>
    <scope>NUCLEOTIDE SEQUENCE [GENOMIC DNA]</scope>
</reference>
<reference key="3">
    <citation type="journal article" date="2003" name="Microbiol. Mol. Biol. Rev.">
        <title>Bacteriophage T4 genome.</title>
        <authorList>
            <person name="Miller E.S."/>
            <person name="Kutter E."/>
            <person name="Mosig G."/>
            <person name="Arisaka F."/>
            <person name="Kunisawa T."/>
            <person name="Ruger W."/>
        </authorList>
    </citation>
    <scope>NUCLEOTIDE SEQUENCE [GENOMIC DNA]</scope>
</reference>
<reference key="4">
    <citation type="journal article" date="1987" name="Proc. Natl. Acad. Sci. U.S.A.">
        <title>Bacteriophage T4 regA protein binds to mRNAs and prevents translation initiation.</title>
        <authorList>
            <person name="Winter R.B."/>
            <person name="Morrisey L."/>
            <person name="Gauss P."/>
            <person name="Gold L."/>
            <person name="Hsu T."/>
            <person name="Karam J."/>
        </authorList>
    </citation>
    <scope>MECHANISM OF TRANSLATION REGULATION</scope>
</reference>
<reference key="5">
    <citation type="journal article" date="1992" name="J. Biol. Chem.">
        <title>Identification of amino acid residues at the interface of a bacteriophage T4 regA protein-nucleic acid complex.</title>
        <authorList>
            <person name="Webster K.R."/>
            <person name="Keill S."/>
            <person name="Konigsberg W."/>
            <person name="Williams K.R."/>
            <person name="Spicer E.K."/>
        </authorList>
    </citation>
    <scope>CHARACTERIZATION</scope>
</reference>
<reference key="6">
    <citation type="journal article" date="1995" name="Science">
        <title>Crystal structure of the T4 regA translational regulator protein at 1.9-A resolution.</title>
        <authorList>
            <person name="Kang C."/>
            <person name="Chan R."/>
            <person name="Berger I."/>
            <person name="Lockshin C."/>
            <person name="Green L."/>
            <person name="Gold L."/>
            <person name="Rich A."/>
        </authorList>
    </citation>
    <scope>X-RAY CRYSTALLOGRAPHY (1.9 ANGSTROMS)</scope>
</reference>
<sequence length="122" mass="14619">MIEITLKKPEDFLKVKETLTRMGIANNKDKVLYQSCHILQKKGLYYIVHFKEMLRMDGRQVEMTEEDEVRRDSIAWLLEDWGLIEIVPGQRTFMKDLTNNFRVISFKQKHEWKLVPKYTIGN</sequence>
<evidence type="ECO:0000255" key="1"/>
<evidence type="ECO:0007829" key="2">
    <source>
        <dbReference type="PDB" id="1REG"/>
    </source>
</evidence>